<accession>Q47LM2</accession>
<dbReference type="EMBL" id="CP000088">
    <property type="protein sequence ID" value="AAZ56650.1"/>
    <property type="molecule type" value="Genomic_DNA"/>
</dbReference>
<dbReference type="RefSeq" id="WP_011293040.1">
    <property type="nucleotide sequence ID" value="NC_007333.1"/>
</dbReference>
<dbReference type="SMR" id="Q47LM2"/>
<dbReference type="STRING" id="269800.Tfu_2617"/>
<dbReference type="KEGG" id="tfu:Tfu_2617"/>
<dbReference type="eggNOG" id="COG0203">
    <property type="taxonomic scope" value="Bacteria"/>
</dbReference>
<dbReference type="HOGENOM" id="CLU_074407_0_0_11"/>
<dbReference type="OrthoDB" id="9809073at2"/>
<dbReference type="GO" id="GO:0022625">
    <property type="term" value="C:cytosolic large ribosomal subunit"/>
    <property type="evidence" value="ECO:0007669"/>
    <property type="project" value="TreeGrafter"/>
</dbReference>
<dbReference type="GO" id="GO:0003735">
    <property type="term" value="F:structural constituent of ribosome"/>
    <property type="evidence" value="ECO:0007669"/>
    <property type="project" value="InterPro"/>
</dbReference>
<dbReference type="GO" id="GO:0006412">
    <property type="term" value="P:translation"/>
    <property type="evidence" value="ECO:0007669"/>
    <property type="project" value="UniProtKB-UniRule"/>
</dbReference>
<dbReference type="FunFam" id="3.90.1030.10:FF:000001">
    <property type="entry name" value="50S ribosomal protein L17"/>
    <property type="match status" value="1"/>
</dbReference>
<dbReference type="Gene3D" id="3.90.1030.10">
    <property type="entry name" value="Ribosomal protein L17"/>
    <property type="match status" value="1"/>
</dbReference>
<dbReference type="HAMAP" id="MF_01368">
    <property type="entry name" value="Ribosomal_bL17"/>
    <property type="match status" value="1"/>
</dbReference>
<dbReference type="InterPro" id="IPR000456">
    <property type="entry name" value="Ribosomal_bL17"/>
</dbReference>
<dbReference type="InterPro" id="IPR047859">
    <property type="entry name" value="Ribosomal_bL17_CS"/>
</dbReference>
<dbReference type="InterPro" id="IPR036373">
    <property type="entry name" value="Ribosomal_bL17_sf"/>
</dbReference>
<dbReference type="NCBIfam" id="TIGR00059">
    <property type="entry name" value="L17"/>
    <property type="match status" value="1"/>
</dbReference>
<dbReference type="PANTHER" id="PTHR14413:SF16">
    <property type="entry name" value="LARGE RIBOSOMAL SUBUNIT PROTEIN BL17M"/>
    <property type="match status" value="1"/>
</dbReference>
<dbReference type="PANTHER" id="PTHR14413">
    <property type="entry name" value="RIBOSOMAL PROTEIN L17"/>
    <property type="match status" value="1"/>
</dbReference>
<dbReference type="Pfam" id="PF01196">
    <property type="entry name" value="Ribosomal_L17"/>
    <property type="match status" value="1"/>
</dbReference>
<dbReference type="SUPFAM" id="SSF64263">
    <property type="entry name" value="Prokaryotic ribosomal protein L17"/>
    <property type="match status" value="1"/>
</dbReference>
<dbReference type="PROSITE" id="PS01167">
    <property type="entry name" value="RIBOSOMAL_L17"/>
    <property type="match status" value="1"/>
</dbReference>
<name>RL17_THEFY</name>
<gene>
    <name evidence="1" type="primary">rplQ</name>
    <name type="ordered locus">Tfu_2617</name>
</gene>
<feature type="chain" id="PRO_0000267958" description="Large ribosomal subunit protein bL17">
    <location>
        <begin position="1"/>
        <end position="172"/>
    </location>
</feature>
<feature type="region of interest" description="Disordered" evidence="2">
    <location>
        <begin position="123"/>
        <end position="172"/>
    </location>
</feature>
<feature type="compositionally biased region" description="Low complexity" evidence="2">
    <location>
        <begin position="132"/>
        <end position="143"/>
    </location>
</feature>
<reference key="1">
    <citation type="journal article" date="2007" name="J. Bacteriol.">
        <title>Genome sequence and analysis of the soil cellulolytic actinomycete Thermobifida fusca YX.</title>
        <authorList>
            <person name="Lykidis A."/>
            <person name="Mavromatis K."/>
            <person name="Ivanova N."/>
            <person name="Anderson I."/>
            <person name="Land M."/>
            <person name="DiBartolo G."/>
            <person name="Martinez M."/>
            <person name="Lapidus A."/>
            <person name="Lucas S."/>
            <person name="Copeland A."/>
            <person name="Richardson P."/>
            <person name="Wilson D.B."/>
            <person name="Kyrpides N."/>
        </authorList>
    </citation>
    <scope>NUCLEOTIDE SEQUENCE [LARGE SCALE GENOMIC DNA]</scope>
    <source>
        <strain>YX</strain>
    </source>
</reference>
<keyword id="KW-0687">Ribonucleoprotein</keyword>
<keyword id="KW-0689">Ribosomal protein</keyword>
<comment type="subunit">
    <text evidence="1">Part of the 50S ribosomal subunit. Contacts protein L32.</text>
</comment>
<comment type="similarity">
    <text evidence="1">Belongs to the bacterial ribosomal protein bL17 family.</text>
</comment>
<organism>
    <name type="scientific">Thermobifida fusca (strain YX)</name>
    <dbReference type="NCBI Taxonomy" id="269800"/>
    <lineage>
        <taxon>Bacteria</taxon>
        <taxon>Bacillati</taxon>
        <taxon>Actinomycetota</taxon>
        <taxon>Actinomycetes</taxon>
        <taxon>Streptosporangiales</taxon>
        <taxon>Nocardiopsidaceae</taxon>
        <taxon>Thermobifida</taxon>
    </lineage>
</organism>
<proteinExistence type="inferred from homology"/>
<protein>
    <recommendedName>
        <fullName evidence="1">Large ribosomal subunit protein bL17</fullName>
    </recommendedName>
    <alternativeName>
        <fullName evidence="3">50S ribosomal protein L17</fullName>
    </alternativeName>
</protein>
<sequence>MPTPTKGPRLGGGPAHERLMLANLATALFRHGRIKTTEAKAKRLRPYAEKLITLGKRGDLHARRQVLTKIRDKAVVHELFTEIGPRYENRNGGYTRITKIGNRKGDNAPMAVIELVEALNKPATGSKRAQTEEAASQEPAAEAGKQPAEGATSVQTAEAADASQAEGEAEEK</sequence>
<evidence type="ECO:0000255" key="1">
    <source>
        <dbReference type="HAMAP-Rule" id="MF_01368"/>
    </source>
</evidence>
<evidence type="ECO:0000256" key="2">
    <source>
        <dbReference type="SAM" id="MobiDB-lite"/>
    </source>
</evidence>
<evidence type="ECO:0000305" key="3"/>